<proteinExistence type="inferred from homology"/>
<protein>
    <recommendedName>
        <fullName evidence="1">Phosphopentomutase</fullName>
        <ecNumber evidence="1">5.4.2.7</ecNumber>
    </recommendedName>
    <alternativeName>
        <fullName evidence="1">Phosphodeoxyribomutase</fullName>
    </alternativeName>
</protein>
<feature type="chain" id="PRO_0000258318" description="Phosphopentomutase">
    <location>
        <begin position="1"/>
        <end position="403"/>
    </location>
</feature>
<feature type="binding site" evidence="1">
    <location>
        <position position="13"/>
    </location>
    <ligand>
        <name>Mn(2+)</name>
        <dbReference type="ChEBI" id="CHEBI:29035"/>
        <label>1</label>
    </ligand>
</feature>
<feature type="binding site" evidence="1">
    <location>
        <position position="298"/>
    </location>
    <ligand>
        <name>Mn(2+)</name>
        <dbReference type="ChEBI" id="CHEBI:29035"/>
        <label>2</label>
    </ligand>
</feature>
<feature type="binding site" evidence="1">
    <location>
        <position position="303"/>
    </location>
    <ligand>
        <name>Mn(2+)</name>
        <dbReference type="ChEBI" id="CHEBI:29035"/>
        <label>2</label>
    </ligand>
</feature>
<feature type="binding site" evidence="1">
    <location>
        <position position="339"/>
    </location>
    <ligand>
        <name>Mn(2+)</name>
        <dbReference type="ChEBI" id="CHEBI:29035"/>
        <label>1</label>
    </ligand>
</feature>
<feature type="binding site" evidence="1">
    <location>
        <position position="340"/>
    </location>
    <ligand>
        <name>Mn(2+)</name>
        <dbReference type="ChEBI" id="CHEBI:29035"/>
        <label>1</label>
    </ligand>
</feature>
<feature type="binding site" evidence="1">
    <location>
        <position position="351"/>
    </location>
    <ligand>
        <name>Mn(2+)</name>
        <dbReference type="ChEBI" id="CHEBI:29035"/>
        <label>2</label>
    </ligand>
</feature>
<dbReference type="EC" id="5.4.2.7" evidence="1"/>
<dbReference type="EMBL" id="CP000024">
    <property type="protein sequence ID" value="AAV62671.1"/>
    <property type="molecule type" value="Genomic_DNA"/>
</dbReference>
<dbReference type="RefSeq" id="WP_011227254.1">
    <property type="nucleotide sequence ID" value="NC_006449.1"/>
</dbReference>
<dbReference type="SMR" id="Q5LZM6"/>
<dbReference type="KEGG" id="stc:str1120"/>
<dbReference type="HOGENOM" id="CLU_053861_0_0_9"/>
<dbReference type="UniPathway" id="UPA00002">
    <property type="reaction ID" value="UER00467"/>
</dbReference>
<dbReference type="GO" id="GO:0005829">
    <property type="term" value="C:cytosol"/>
    <property type="evidence" value="ECO:0007669"/>
    <property type="project" value="TreeGrafter"/>
</dbReference>
<dbReference type="GO" id="GO:0000287">
    <property type="term" value="F:magnesium ion binding"/>
    <property type="evidence" value="ECO:0007669"/>
    <property type="project" value="InterPro"/>
</dbReference>
<dbReference type="GO" id="GO:0030145">
    <property type="term" value="F:manganese ion binding"/>
    <property type="evidence" value="ECO:0007669"/>
    <property type="project" value="UniProtKB-UniRule"/>
</dbReference>
<dbReference type="GO" id="GO:0008973">
    <property type="term" value="F:phosphopentomutase activity"/>
    <property type="evidence" value="ECO:0007669"/>
    <property type="project" value="UniProtKB-UniRule"/>
</dbReference>
<dbReference type="GO" id="GO:0006018">
    <property type="term" value="P:2-deoxyribose 1-phosphate catabolic process"/>
    <property type="evidence" value="ECO:0007669"/>
    <property type="project" value="UniProtKB-UniRule"/>
</dbReference>
<dbReference type="GO" id="GO:0006015">
    <property type="term" value="P:5-phosphoribose 1-diphosphate biosynthetic process"/>
    <property type="evidence" value="ECO:0007669"/>
    <property type="project" value="UniProtKB-UniPathway"/>
</dbReference>
<dbReference type="GO" id="GO:0043094">
    <property type="term" value="P:metabolic compound salvage"/>
    <property type="evidence" value="ECO:0007669"/>
    <property type="project" value="InterPro"/>
</dbReference>
<dbReference type="GO" id="GO:0009117">
    <property type="term" value="P:nucleotide metabolic process"/>
    <property type="evidence" value="ECO:0007669"/>
    <property type="project" value="InterPro"/>
</dbReference>
<dbReference type="CDD" id="cd16009">
    <property type="entry name" value="PPM"/>
    <property type="match status" value="1"/>
</dbReference>
<dbReference type="FunFam" id="3.30.70.1250:FF:000001">
    <property type="entry name" value="Phosphopentomutase"/>
    <property type="match status" value="1"/>
</dbReference>
<dbReference type="Gene3D" id="3.40.720.10">
    <property type="entry name" value="Alkaline Phosphatase, subunit A"/>
    <property type="match status" value="1"/>
</dbReference>
<dbReference type="Gene3D" id="3.30.70.1250">
    <property type="entry name" value="Phosphopentomutase"/>
    <property type="match status" value="1"/>
</dbReference>
<dbReference type="HAMAP" id="MF_00740">
    <property type="entry name" value="Phosphopentomut"/>
    <property type="match status" value="1"/>
</dbReference>
<dbReference type="InterPro" id="IPR017850">
    <property type="entry name" value="Alkaline_phosphatase_core_sf"/>
</dbReference>
<dbReference type="InterPro" id="IPR010045">
    <property type="entry name" value="DeoB"/>
</dbReference>
<dbReference type="InterPro" id="IPR006124">
    <property type="entry name" value="Metalloenzyme"/>
</dbReference>
<dbReference type="InterPro" id="IPR024052">
    <property type="entry name" value="Phosphopentomutase_DeoB_cap_sf"/>
</dbReference>
<dbReference type="NCBIfam" id="TIGR01696">
    <property type="entry name" value="deoB"/>
    <property type="match status" value="1"/>
</dbReference>
<dbReference type="NCBIfam" id="NF003766">
    <property type="entry name" value="PRK05362.1"/>
    <property type="match status" value="1"/>
</dbReference>
<dbReference type="PANTHER" id="PTHR21110">
    <property type="entry name" value="PHOSPHOPENTOMUTASE"/>
    <property type="match status" value="1"/>
</dbReference>
<dbReference type="PANTHER" id="PTHR21110:SF0">
    <property type="entry name" value="PHOSPHOPENTOMUTASE"/>
    <property type="match status" value="1"/>
</dbReference>
<dbReference type="Pfam" id="PF01676">
    <property type="entry name" value="Metalloenzyme"/>
    <property type="match status" value="1"/>
</dbReference>
<dbReference type="PIRSF" id="PIRSF001491">
    <property type="entry name" value="Ppentomutase"/>
    <property type="match status" value="1"/>
</dbReference>
<dbReference type="SUPFAM" id="SSF53649">
    <property type="entry name" value="Alkaline phosphatase-like"/>
    <property type="match status" value="1"/>
</dbReference>
<dbReference type="SUPFAM" id="SSF143856">
    <property type="entry name" value="DeoB insert domain-like"/>
    <property type="match status" value="1"/>
</dbReference>
<sequence>MSKFNRMHLIVLDSVGIGAAPDANNFVNAGVPDGASDTLGHISKTVGLNVPNMAKLGLGNIPREQPLKTVPAESNPTGYATKLEEVSLGKDTMTGHWEIMGLNITEPFDTFWNGFPEEILTQIEEFSGRKVIREANKPYSGTAVIDDFGPRQMETGELIIYTSADPVLQIAAHEDIIPVEELYRICEFARSITLERPALLGRIIARPYVGEPENFTRTSNRRDLAISPFAPTVLDKLNEAGIDTYSVGKISDIFNGEGINHDMGHNKSNNHGVDNLIKAMTSEDFKHGFSFTNLVDFDALYGHRRNPQGYRDCLHEFDERLPEIIAAMKEDDLLMITADHGNDPTYAGTDHTREYIPFLAYSPSFKCSGLIPVGHFADISATIADNFGVEKAMIGESFLDKLV</sequence>
<gene>
    <name evidence="1" type="primary">deoB</name>
    <name type="ordered locus">str1120</name>
</gene>
<name>DEOB_STRT1</name>
<comment type="function">
    <text evidence="1">Isomerase that catalyzes the conversion of deoxy-ribose 1-phosphate (dRib-1-P) and ribose 1-phosphate (Rib-1-P) to deoxy-ribose 5-phosphate (dRib-5-P) and ribose 5-phosphate (Rib-5-P), respectively.</text>
</comment>
<comment type="catalytic activity">
    <reaction evidence="1">
        <text>2-deoxy-alpha-D-ribose 1-phosphate = 2-deoxy-D-ribose 5-phosphate</text>
        <dbReference type="Rhea" id="RHEA:27658"/>
        <dbReference type="ChEBI" id="CHEBI:57259"/>
        <dbReference type="ChEBI" id="CHEBI:62877"/>
        <dbReference type="EC" id="5.4.2.7"/>
    </reaction>
</comment>
<comment type="catalytic activity">
    <reaction evidence="1">
        <text>alpha-D-ribose 1-phosphate = D-ribose 5-phosphate</text>
        <dbReference type="Rhea" id="RHEA:18793"/>
        <dbReference type="ChEBI" id="CHEBI:57720"/>
        <dbReference type="ChEBI" id="CHEBI:78346"/>
        <dbReference type="EC" id="5.4.2.7"/>
    </reaction>
</comment>
<comment type="cofactor">
    <cofactor evidence="1">
        <name>Mn(2+)</name>
        <dbReference type="ChEBI" id="CHEBI:29035"/>
    </cofactor>
    <text evidence="1">Binds 2 manganese ions.</text>
</comment>
<comment type="pathway">
    <text evidence="1">Carbohydrate degradation; 2-deoxy-D-ribose 1-phosphate degradation; D-glyceraldehyde 3-phosphate and acetaldehyde from 2-deoxy-alpha-D-ribose 1-phosphate: step 1/2.</text>
</comment>
<comment type="subcellular location">
    <subcellularLocation>
        <location evidence="1">Cytoplasm</location>
    </subcellularLocation>
</comment>
<comment type="similarity">
    <text evidence="1">Belongs to the phosphopentomutase family.</text>
</comment>
<reference key="1">
    <citation type="journal article" date="2004" name="Nat. Biotechnol.">
        <title>Complete sequence and comparative genome analysis of the dairy bacterium Streptococcus thermophilus.</title>
        <authorList>
            <person name="Bolotin A."/>
            <person name="Quinquis B."/>
            <person name="Renault P."/>
            <person name="Sorokin A."/>
            <person name="Ehrlich S.D."/>
            <person name="Kulakauskas S."/>
            <person name="Lapidus A."/>
            <person name="Goltsman E."/>
            <person name="Mazur M."/>
            <person name="Pusch G.D."/>
            <person name="Fonstein M."/>
            <person name="Overbeek R."/>
            <person name="Kyprides N."/>
            <person name="Purnelle B."/>
            <person name="Prozzi D."/>
            <person name="Ngui K."/>
            <person name="Masuy D."/>
            <person name="Hancy F."/>
            <person name="Burteau S."/>
            <person name="Boutry M."/>
            <person name="Delcour J."/>
            <person name="Goffeau A."/>
            <person name="Hols P."/>
        </authorList>
    </citation>
    <scope>NUCLEOTIDE SEQUENCE [LARGE SCALE GENOMIC DNA]</scope>
    <source>
        <strain>CNRZ 1066</strain>
    </source>
</reference>
<organism>
    <name type="scientific">Streptococcus thermophilus (strain CNRZ 1066)</name>
    <dbReference type="NCBI Taxonomy" id="299768"/>
    <lineage>
        <taxon>Bacteria</taxon>
        <taxon>Bacillati</taxon>
        <taxon>Bacillota</taxon>
        <taxon>Bacilli</taxon>
        <taxon>Lactobacillales</taxon>
        <taxon>Streptococcaceae</taxon>
        <taxon>Streptococcus</taxon>
    </lineage>
</organism>
<accession>Q5LZM6</accession>
<evidence type="ECO:0000255" key="1">
    <source>
        <dbReference type="HAMAP-Rule" id="MF_00740"/>
    </source>
</evidence>
<keyword id="KW-0963">Cytoplasm</keyword>
<keyword id="KW-0413">Isomerase</keyword>
<keyword id="KW-0464">Manganese</keyword>
<keyword id="KW-0479">Metal-binding</keyword>